<accession>A1U7H4</accession>
<feature type="chain" id="PRO_1000055133" description="ATP synthase subunit beta">
    <location>
        <begin position="1"/>
        <end position="464"/>
    </location>
</feature>
<feature type="binding site" evidence="1">
    <location>
        <begin position="148"/>
        <end position="155"/>
    </location>
    <ligand>
        <name>ATP</name>
        <dbReference type="ChEBI" id="CHEBI:30616"/>
    </ligand>
</feature>
<evidence type="ECO:0000255" key="1">
    <source>
        <dbReference type="HAMAP-Rule" id="MF_01347"/>
    </source>
</evidence>
<name>ATPB_MARN8</name>
<proteinExistence type="inferred from homology"/>
<reference key="1">
    <citation type="journal article" date="2011" name="Appl. Environ. Microbiol.">
        <title>Genomic potential of Marinobacter aquaeolei, a biogeochemical 'opportunitroph'.</title>
        <authorList>
            <person name="Singer E."/>
            <person name="Webb E.A."/>
            <person name="Nelson W.C."/>
            <person name="Heidelberg J.F."/>
            <person name="Ivanova N."/>
            <person name="Pati A."/>
            <person name="Edwards K.J."/>
        </authorList>
    </citation>
    <scope>NUCLEOTIDE SEQUENCE [LARGE SCALE GENOMIC DNA]</scope>
    <source>
        <strain>ATCC 700491 / DSM 11845 / VT8</strain>
    </source>
</reference>
<keyword id="KW-0066">ATP synthesis</keyword>
<keyword id="KW-0067">ATP-binding</keyword>
<keyword id="KW-0997">Cell inner membrane</keyword>
<keyword id="KW-1003">Cell membrane</keyword>
<keyword id="KW-0139">CF(1)</keyword>
<keyword id="KW-0375">Hydrogen ion transport</keyword>
<keyword id="KW-0406">Ion transport</keyword>
<keyword id="KW-0472">Membrane</keyword>
<keyword id="KW-0547">Nucleotide-binding</keyword>
<keyword id="KW-1278">Translocase</keyword>
<keyword id="KW-0813">Transport</keyword>
<dbReference type="EC" id="7.1.2.2" evidence="1"/>
<dbReference type="EMBL" id="CP000514">
    <property type="protein sequence ID" value="ABM20943.1"/>
    <property type="molecule type" value="Genomic_DNA"/>
</dbReference>
<dbReference type="RefSeq" id="WP_011787276.1">
    <property type="nucleotide sequence ID" value="NC_008740.1"/>
</dbReference>
<dbReference type="SMR" id="A1U7H4"/>
<dbReference type="STRING" id="351348.Maqu_3875"/>
<dbReference type="GeneID" id="31823147"/>
<dbReference type="KEGG" id="maq:Maqu_3875"/>
<dbReference type="eggNOG" id="COG0055">
    <property type="taxonomic scope" value="Bacteria"/>
</dbReference>
<dbReference type="HOGENOM" id="CLU_022398_0_2_6"/>
<dbReference type="OrthoDB" id="9801639at2"/>
<dbReference type="Proteomes" id="UP000000998">
    <property type="component" value="Chromosome"/>
</dbReference>
<dbReference type="GO" id="GO:0005886">
    <property type="term" value="C:plasma membrane"/>
    <property type="evidence" value="ECO:0007669"/>
    <property type="project" value="UniProtKB-SubCell"/>
</dbReference>
<dbReference type="GO" id="GO:0045259">
    <property type="term" value="C:proton-transporting ATP synthase complex"/>
    <property type="evidence" value="ECO:0007669"/>
    <property type="project" value="UniProtKB-KW"/>
</dbReference>
<dbReference type="GO" id="GO:0005524">
    <property type="term" value="F:ATP binding"/>
    <property type="evidence" value="ECO:0007669"/>
    <property type="project" value="UniProtKB-UniRule"/>
</dbReference>
<dbReference type="GO" id="GO:0016887">
    <property type="term" value="F:ATP hydrolysis activity"/>
    <property type="evidence" value="ECO:0007669"/>
    <property type="project" value="InterPro"/>
</dbReference>
<dbReference type="GO" id="GO:0046933">
    <property type="term" value="F:proton-transporting ATP synthase activity, rotational mechanism"/>
    <property type="evidence" value="ECO:0007669"/>
    <property type="project" value="UniProtKB-UniRule"/>
</dbReference>
<dbReference type="CDD" id="cd18110">
    <property type="entry name" value="ATP-synt_F1_beta_C"/>
    <property type="match status" value="1"/>
</dbReference>
<dbReference type="CDD" id="cd18115">
    <property type="entry name" value="ATP-synt_F1_beta_N"/>
    <property type="match status" value="1"/>
</dbReference>
<dbReference type="CDD" id="cd01133">
    <property type="entry name" value="F1-ATPase_beta_CD"/>
    <property type="match status" value="1"/>
</dbReference>
<dbReference type="FunFam" id="1.10.1140.10:FF:000001">
    <property type="entry name" value="ATP synthase subunit beta"/>
    <property type="match status" value="1"/>
</dbReference>
<dbReference type="FunFam" id="3.40.50.300:FF:000004">
    <property type="entry name" value="ATP synthase subunit beta"/>
    <property type="match status" value="1"/>
</dbReference>
<dbReference type="Gene3D" id="2.40.10.170">
    <property type="match status" value="1"/>
</dbReference>
<dbReference type="Gene3D" id="1.10.1140.10">
    <property type="entry name" value="Bovine Mitochondrial F1-atpase, Atp Synthase Beta Chain, Chain D, domain 3"/>
    <property type="match status" value="1"/>
</dbReference>
<dbReference type="Gene3D" id="3.40.50.300">
    <property type="entry name" value="P-loop containing nucleotide triphosphate hydrolases"/>
    <property type="match status" value="1"/>
</dbReference>
<dbReference type="HAMAP" id="MF_01347">
    <property type="entry name" value="ATP_synth_beta_bact"/>
    <property type="match status" value="1"/>
</dbReference>
<dbReference type="InterPro" id="IPR003593">
    <property type="entry name" value="AAA+_ATPase"/>
</dbReference>
<dbReference type="InterPro" id="IPR055190">
    <property type="entry name" value="ATP-synt_VA_C"/>
</dbReference>
<dbReference type="InterPro" id="IPR005722">
    <property type="entry name" value="ATP_synth_F1_bsu"/>
</dbReference>
<dbReference type="InterPro" id="IPR020003">
    <property type="entry name" value="ATPase_a/bsu_AS"/>
</dbReference>
<dbReference type="InterPro" id="IPR050053">
    <property type="entry name" value="ATPase_alpha/beta_chains"/>
</dbReference>
<dbReference type="InterPro" id="IPR004100">
    <property type="entry name" value="ATPase_F1/V1/A1_a/bsu_N"/>
</dbReference>
<dbReference type="InterPro" id="IPR036121">
    <property type="entry name" value="ATPase_F1/V1/A1_a/bsu_N_sf"/>
</dbReference>
<dbReference type="InterPro" id="IPR000194">
    <property type="entry name" value="ATPase_F1/V1/A1_a/bsu_nucl-bd"/>
</dbReference>
<dbReference type="InterPro" id="IPR024034">
    <property type="entry name" value="ATPase_F1/V1_b/a_C"/>
</dbReference>
<dbReference type="InterPro" id="IPR027417">
    <property type="entry name" value="P-loop_NTPase"/>
</dbReference>
<dbReference type="NCBIfam" id="TIGR01039">
    <property type="entry name" value="atpD"/>
    <property type="match status" value="1"/>
</dbReference>
<dbReference type="PANTHER" id="PTHR15184">
    <property type="entry name" value="ATP SYNTHASE"/>
    <property type="match status" value="1"/>
</dbReference>
<dbReference type="PANTHER" id="PTHR15184:SF71">
    <property type="entry name" value="ATP SYNTHASE SUBUNIT BETA, MITOCHONDRIAL"/>
    <property type="match status" value="1"/>
</dbReference>
<dbReference type="Pfam" id="PF00006">
    <property type="entry name" value="ATP-synt_ab"/>
    <property type="match status" value="1"/>
</dbReference>
<dbReference type="Pfam" id="PF02874">
    <property type="entry name" value="ATP-synt_ab_N"/>
    <property type="match status" value="1"/>
</dbReference>
<dbReference type="Pfam" id="PF22919">
    <property type="entry name" value="ATP-synt_VA_C"/>
    <property type="match status" value="1"/>
</dbReference>
<dbReference type="SMART" id="SM00382">
    <property type="entry name" value="AAA"/>
    <property type="match status" value="1"/>
</dbReference>
<dbReference type="SUPFAM" id="SSF47917">
    <property type="entry name" value="C-terminal domain of alpha and beta subunits of F1 ATP synthase"/>
    <property type="match status" value="1"/>
</dbReference>
<dbReference type="SUPFAM" id="SSF50615">
    <property type="entry name" value="N-terminal domain of alpha and beta subunits of F1 ATP synthase"/>
    <property type="match status" value="1"/>
</dbReference>
<dbReference type="SUPFAM" id="SSF52540">
    <property type="entry name" value="P-loop containing nucleoside triphosphate hydrolases"/>
    <property type="match status" value="1"/>
</dbReference>
<dbReference type="PROSITE" id="PS00152">
    <property type="entry name" value="ATPASE_ALPHA_BETA"/>
    <property type="match status" value="1"/>
</dbReference>
<organism>
    <name type="scientific">Marinobacter nauticus (strain ATCC 700491 / DSM 11845 / VT8)</name>
    <name type="common">Marinobacter aquaeolei</name>
    <dbReference type="NCBI Taxonomy" id="351348"/>
    <lineage>
        <taxon>Bacteria</taxon>
        <taxon>Pseudomonadati</taxon>
        <taxon>Pseudomonadota</taxon>
        <taxon>Gammaproteobacteria</taxon>
        <taxon>Pseudomonadales</taxon>
        <taxon>Marinobacteraceae</taxon>
        <taxon>Marinobacter</taxon>
    </lineage>
</organism>
<sequence length="464" mass="50442">MSSGHIVQIIGAVIDVEFPRDSVPSVYDALLLEGGETTLEVQQQLGDGIVRTIAMGSTEGLKRGLKAENTGKPISVPVGTQTLGRIMDVLGRPIDEQGDIGEEERWAIHRKAPGYADQAASADLLETGIKVIDLICPFAKGGKVGLFGGAGVGKTVNMMELINNIAKEHSGLSVFAGVGERTREGNDFYYEMKESNVLDKVAMVYGQMNEPPGNRLRVALTGLTMAEKFRDEGRDVLLFVDNIYRYTLAGTEVSALLGRMPSAVGYQPTLAEEMGQLQERITSTKTGSITSIQAVYVPADDLTDPSPATTFSHLDATVVLSRDIASKGIYPAIDPLDSTSRQLDPLVIGEQHYNVARGVQNVLQRYKELKDIIAILGMDELSEDDKLIVSRARKIERFLSQPFHVAEVFTGSPGKYVSLKETIASFEGILNGDYDDMPEQAFYMCGGIEEAIEKAKAMKEKEGK</sequence>
<gene>
    <name evidence="1" type="primary">atpD</name>
    <name type="ordered locus">Maqu_3875</name>
</gene>
<protein>
    <recommendedName>
        <fullName evidence="1">ATP synthase subunit beta</fullName>
        <ecNumber evidence="1">7.1.2.2</ecNumber>
    </recommendedName>
    <alternativeName>
        <fullName evidence="1">ATP synthase F1 sector subunit beta</fullName>
    </alternativeName>
    <alternativeName>
        <fullName evidence="1">F-ATPase subunit beta</fullName>
    </alternativeName>
</protein>
<comment type="function">
    <text evidence="1">Produces ATP from ADP in the presence of a proton gradient across the membrane. The catalytic sites are hosted primarily by the beta subunits.</text>
</comment>
<comment type="catalytic activity">
    <reaction evidence="1">
        <text>ATP + H2O + 4 H(+)(in) = ADP + phosphate + 5 H(+)(out)</text>
        <dbReference type="Rhea" id="RHEA:57720"/>
        <dbReference type="ChEBI" id="CHEBI:15377"/>
        <dbReference type="ChEBI" id="CHEBI:15378"/>
        <dbReference type="ChEBI" id="CHEBI:30616"/>
        <dbReference type="ChEBI" id="CHEBI:43474"/>
        <dbReference type="ChEBI" id="CHEBI:456216"/>
        <dbReference type="EC" id="7.1.2.2"/>
    </reaction>
</comment>
<comment type="subunit">
    <text evidence="1">F-type ATPases have 2 components, CF(1) - the catalytic core - and CF(0) - the membrane proton channel. CF(1) has five subunits: alpha(3), beta(3), gamma(1), delta(1), epsilon(1). CF(0) has three main subunits: a(1), b(2) and c(9-12). The alpha and beta chains form an alternating ring which encloses part of the gamma chain. CF(1) is attached to CF(0) by a central stalk formed by the gamma and epsilon chains, while a peripheral stalk is formed by the delta and b chains.</text>
</comment>
<comment type="subcellular location">
    <subcellularLocation>
        <location evidence="1">Cell inner membrane</location>
        <topology evidence="1">Peripheral membrane protein</topology>
    </subcellularLocation>
</comment>
<comment type="similarity">
    <text evidence="1">Belongs to the ATPase alpha/beta chains family.</text>
</comment>